<evidence type="ECO:0000250" key="1"/>
<evidence type="ECO:0000250" key="2">
    <source>
        <dbReference type="UniProtKB" id="Q9X1H9"/>
    </source>
</evidence>
<evidence type="ECO:0000255" key="3">
    <source>
        <dbReference type="PROSITE-ProRule" id="PRU00815"/>
    </source>
</evidence>
<sequence length="314" mass="34199">MRIGIVVDSACDLPQDFIQRHNIVVLPISVRIGEAVLADHRDEEATLSFLQAHVAERGHEAETTPFSVNQIRDLFLQQLVIDYDHVFCLTISKLRSQIFDNAMQASFAILNDYKPIRQAAGHTSPFALRVIDTLNLFAGQGITAVEAARLRDQGQSVAVIRTRLEQLAEHTYGYMIPRDLYYLRARARTKGDRSVGLIGAALGSALDIKPVLRAYRGVTEPVAKLKGFEPSAEKLFGFTVRKIRDGLMTPTVCVGYGGELAELHALPGYAALQGACQTHGVELLESVMSLTGMVNVGKGALAVGFAAEPHAFSA</sequence>
<feature type="chain" id="PRO_0000209821" description="DegV domain-containing protein XAC3508">
    <location>
        <begin position="1"/>
        <end position="314"/>
    </location>
</feature>
<feature type="domain" description="DegV" evidence="3">
    <location>
        <begin position="3"/>
        <end position="307"/>
    </location>
</feature>
<feature type="binding site" evidence="2">
    <location>
        <position position="63"/>
    </location>
    <ligand>
        <name>hexadecanoate</name>
        <dbReference type="ChEBI" id="CHEBI:7896"/>
    </ligand>
</feature>
<feature type="binding site" evidence="2">
    <location>
        <position position="96"/>
    </location>
    <ligand>
        <name>hexadecanoate</name>
        <dbReference type="ChEBI" id="CHEBI:7896"/>
    </ligand>
</feature>
<dbReference type="EMBL" id="AE008923">
    <property type="protein sequence ID" value="AAM38352.1"/>
    <property type="molecule type" value="Genomic_DNA"/>
</dbReference>
<dbReference type="RefSeq" id="WP_003483469.1">
    <property type="nucleotide sequence ID" value="NC_003919.1"/>
</dbReference>
<dbReference type="SMR" id="Q8PGV3"/>
<dbReference type="KEGG" id="xac:XAC3508"/>
<dbReference type="eggNOG" id="COG1307">
    <property type="taxonomic scope" value="Bacteria"/>
</dbReference>
<dbReference type="HOGENOM" id="CLU_069606_0_0_6"/>
<dbReference type="Proteomes" id="UP000000576">
    <property type="component" value="Chromosome"/>
</dbReference>
<dbReference type="GO" id="GO:0008289">
    <property type="term" value="F:lipid binding"/>
    <property type="evidence" value="ECO:0007669"/>
    <property type="project" value="UniProtKB-KW"/>
</dbReference>
<dbReference type="Gene3D" id="3.30.1180.10">
    <property type="match status" value="1"/>
</dbReference>
<dbReference type="Gene3D" id="3.40.50.10170">
    <property type="match status" value="1"/>
</dbReference>
<dbReference type="InterPro" id="IPR003797">
    <property type="entry name" value="DegV"/>
</dbReference>
<dbReference type="InterPro" id="IPR043168">
    <property type="entry name" value="DegV_C"/>
</dbReference>
<dbReference type="InterPro" id="IPR050270">
    <property type="entry name" value="DegV_domain_contain"/>
</dbReference>
<dbReference type="NCBIfam" id="TIGR00762">
    <property type="entry name" value="DegV"/>
    <property type="match status" value="1"/>
</dbReference>
<dbReference type="PANTHER" id="PTHR33434">
    <property type="entry name" value="DEGV DOMAIN-CONTAINING PROTEIN DR_1986-RELATED"/>
    <property type="match status" value="1"/>
</dbReference>
<dbReference type="PANTHER" id="PTHR33434:SF2">
    <property type="entry name" value="FATTY ACID-BINDING PROTEIN TM_1468"/>
    <property type="match status" value="1"/>
</dbReference>
<dbReference type="Pfam" id="PF02645">
    <property type="entry name" value="DegV"/>
    <property type="match status" value="1"/>
</dbReference>
<dbReference type="SUPFAM" id="SSF82549">
    <property type="entry name" value="DAK1/DegV-like"/>
    <property type="match status" value="1"/>
</dbReference>
<dbReference type="PROSITE" id="PS51482">
    <property type="entry name" value="DEGV"/>
    <property type="match status" value="1"/>
</dbReference>
<accession>Q8PGV3</accession>
<comment type="function">
    <text evidence="1">May bind long-chain fatty acids, such as palmitate, and may play a role in lipid transport or fatty acid metabolism.</text>
</comment>
<gene>
    <name type="ordered locus">XAC3508</name>
</gene>
<proteinExistence type="inferred from homology"/>
<name>Y3508_XANAC</name>
<reference key="1">
    <citation type="journal article" date="2002" name="Nature">
        <title>Comparison of the genomes of two Xanthomonas pathogens with differing host specificities.</title>
        <authorList>
            <person name="da Silva A.C.R."/>
            <person name="Ferro J.A."/>
            <person name="Reinach F.C."/>
            <person name="Farah C.S."/>
            <person name="Furlan L.R."/>
            <person name="Quaggio R.B."/>
            <person name="Monteiro-Vitorello C.B."/>
            <person name="Van Sluys M.A."/>
            <person name="Almeida N.F. Jr."/>
            <person name="Alves L.M.C."/>
            <person name="do Amaral A.M."/>
            <person name="Bertolini M.C."/>
            <person name="Camargo L.E.A."/>
            <person name="Camarotte G."/>
            <person name="Cannavan F."/>
            <person name="Cardozo J."/>
            <person name="Chambergo F."/>
            <person name="Ciapina L.P."/>
            <person name="Cicarelli R.M.B."/>
            <person name="Coutinho L.L."/>
            <person name="Cursino-Santos J.R."/>
            <person name="El-Dorry H."/>
            <person name="Faria J.B."/>
            <person name="Ferreira A.J.S."/>
            <person name="Ferreira R.C.C."/>
            <person name="Ferro M.I.T."/>
            <person name="Formighieri E.F."/>
            <person name="Franco M.C."/>
            <person name="Greggio C.C."/>
            <person name="Gruber A."/>
            <person name="Katsuyama A.M."/>
            <person name="Kishi L.T."/>
            <person name="Leite R.P."/>
            <person name="Lemos E.G.M."/>
            <person name="Lemos M.V.F."/>
            <person name="Locali E.C."/>
            <person name="Machado M.A."/>
            <person name="Madeira A.M.B.N."/>
            <person name="Martinez-Rossi N.M."/>
            <person name="Martins E.C."/>
            <person name="Meidanis J."/>
            <person name="Menck C.F.M."/>
            <person name="Miyaki C.Y."/>
            <person name="Moon D.H."/>
            <person name="Moreira L.M."/>
            <person name="Novo M.T.M."/>
            <person name="Okura V.K."/>
            <person name="Oliveira M.C."/>
            <person name="Oliveira V.R."/>
            <person name="Pereira H.A."/>
            <person name="Rossi A."/>
            <person name="Sena J.A.D."/>
            <person name="Silva C."/>
            <person name="de Souza R.F."/>
            <person name="Spinola L.A.F."/>
            <person name="Takita M.A."/>
            <person name="Tamura R.E."/>
            <person name="Teixeira E.C."/>
            <person name="Tezza R.I.D."/>
            <person name="Trindade dos Santos M."/>
            <person name="Truffi D."/>
            <person name="Tsai S.M."/>
            <person name="White F.F."/>
            <person name="Setubal J.C."/>
            <person name="Kitajima J.P."/>
        </authorList>
    </citation>
    <scope>NUCLEOTIDE SEQUENCE [LARGE SCALE GENOMIC DNA]</scope>
    <source>
        <strain>306</strain>
    </source>
</reference>
<keyword id="KW-0446">Lipid-binding</keyword>
<protein>
    <recommendedName>
        <fullName>DegV domain-containing protein XAC3508</fullName>
    </recommendedName>
</protein>
<organism>
    <name type="scientific">Xanthomonas axonopodis pv. citri (strain 306)</name>
    <dbReference type="NCBI Taxonomy" id="190486"/>
    <lineage>
        <taxon>Bacteria</taxon>
        <taxon>Pseudomonadati</taxon>
        <taxon>Pseudomonadota</taxon>
        <taxon>Gammaproteobacteria</taxon>
        <taxon>Lysobacterales</taxon>
        <taxon>Lysobacteraceae</taxon>
        <taxon>Xanthomonas</taxon>
    </lineage>
</organism>